<organism>
    <name type="scientific">Shouchella clausii (strain KSM-K16)</name>
    <name type="common">Alkalihalobacillus clausii</name>
    <dbReference type="NCBI Taxonomy" id="66692"/>
    <lineage>
        <taxon>Bacteria</taxon>
        <taxon>Bacillati</taxon>
        <taxon>Bacillota</taxon>
        <taxon>Bacilli</taxon>
        <taxon>Bacillales</taxon>
        <taxon>Bacillaceae</taxon>
        <taxon>Shouchella</taxon>
    </lineage>
</organism>
<feature type="chain" id="PRO_0000231160" description="UDP-N-acetylglucosamine 1-carboxyvinyltransferase 2">
    <location>
        <begin position="1"/>
        <end position="428"/>
    </location>
</feature>
<feature type="active site" description="Proton donor" evidence="1">
    <location>
        <position position="116"/>
    </location>
</feature>
<feature type="binding site" evidence="1">
    <location>
        <begin position="22"/>
        <end position="23"/>
    </location>
    <ligand>
        <name>phosphoenolpyruvate</name>
        <dbReference type="ChEBI" id="CHEBI:58702"/>
    </ligand>
</feature>
<feature type="binding site" evidence="1">
    <location>
        <position position="92"/>
    </location>
    <ligand>
        <name>UDP-N-acetyl-alpha-D-glucosamine</name>
        <dbReference type="ChEBI" id="CHEBI:57705"/>
    </ligand>
</feature>
<feature type="binding site" evidence="1">
    <location>
        <begin position="121"/>
        <end position="125"/>
    </location>
    <ligand>
        <name>UDP-N-acetyl-alpha-D-glucosamine</name>
        <dbReference type="ChEBI" id="CHEBI:57705"/>
    </ligand>
</feature>
<feature type="binding site" evidence="1">
    <location>
        <position position="304"/>
    </location>
    <ligand>
        <name>UDP-N-acetyl-alpha-D-glucosamine</name>
        <dbReference type="ChEBI" id="CHEBI:57705"/>
    </ligand>
</feature>
<feature type="binding site" evidence="1">
    <location>
        <position position="326"/>
    </location>
    <ligand>
        <name>UDP-N-acetyl-alpha-D-glucosamine</name>
        <dbReference type="ChEBI" id="CHEBI:57705"/>
    </ligand>
</feature>
<feature type="modified residue" description="2-(S-cysteinyl)pyruvic acid O-phosphothioketal" evidence="1">
    <location>
        <position position="116"/>
    </location>
</feature>
<protein>
    <recommendedName>
        <fullName evidence="1">UDP-N-acetylglucosamine 1-carboxyvinyltransferase 2</fullName>
        <ecNumber evidence="1">2.5.1.7</ecNumber>
    </recommendedName>
    <alternativeName>
        <fullName evidence="1">Enoylpyruvate transferase 2</fullName>
    </alternativeName>
    <alternativeName>
        <fullName evidence="1">UDP-N-acetylglucosamine enolpyruvyl transferase 2</fullName>
        <shortName evidence="1">EPT 2</shortName>
    </alternativeName>
</protein>
<evidence type="ECO:0000255" key="1">
    <source>
        <dbReference type="HAMAP-Rule" id="MF_00111"/>
    </source>
</evidence>
<comment type="function">
    <text evidence="1">Cell wall formation. Adds enolpyruvyl to UDP-N-acetylglucosamine.</text>
</comment>
<comment type="catalytic activity">
    <reaction evidence="1">
        <text>phosphoenolpyruvate + UDP-N-acetyl-alpha-D-glucosamine = UDP-N-acetyl-3-O-(1-carboxyvinyl)-alpha-D-glucosamine + phosphate</text>
        <dbReference type="Rhea" id="RHEA:18681"/>
        <dbReference type="ChEBI" id="CHEBI:43474"/>
        <dbReference type="ChEBI" id="CHEBI:57705"/>
        <dbReference type="ChEBI" id="CHEBI:58702"/>
        <dbReference type="ChEBI" id="CHEBI:68483"/>
        <dbReference type="EC" id="2.5.1.7"/>
    </reaction>
</comment>
<comment type="pathway">
    <text evidence="1">Cell wall biogenesis; peptidoglycan biosynthesis.</text>
</comment>
<comment type="subcellular location">
    <subcellularLocation>
        <location evidence="1">Cytoplasm</location>
    </subcellularLocation>
</comment>
<comment type="similarity">
    <text evidence="1">Belongs to the EPSP synthase family. MurA subfamily.</text>
</comment>
<name>MURA2_SHOC1</name>
<sequence length="428" mass="45956">MQKLLIEGGHTLEGTVSISGAKNSAVALIPAAILADSAVVIDNLPVISDVDLLAELLREIGGDVDLGNQTMTIHPEKMVAMPLPNGRVKKLRASYYLMGAMLGKFKKAVIGLPGGCNLGPRPIDQHIKGFEALGAQVTNEQGAIYLRANELRGAKIYLDVVSVGATINIMLAAVRAKGRTIIENAAKEPEIIDVATLLTSMGAKIKGAGTNVIRIDGVDHLQGCRHSIIPDRIEAGTYMIMAAAMGRRVHIDNVIPTHLESVTAKLREMGTTVEEYDDQLIISGMDPKKGVDIKTLVYPGFPTDLQQPFTSLLTSAEGTSIVTDTIYDARFKHVDELRRMGASVKVEGRSSIVNGKSSLQGAKVKASDLRAGAALVIAGLMAEGITEVSGLEHIDRGYEHLETKLTRLGAKVWREELTEEELEQVKQS</sequence>
<keyword id="KW-0131">Cell cycle</keyword>
<keyword id="KW-0132">Cell division</keyword>
<keyword id="KW-0133">Cell shape</keyword>
<keyword id="KW-0961">Cell wall biogenesis/degradation</keyword>
<keyword id="KW-0963">Cytoplasm</keyword>
<keyword id="KW-0573">Peptidoglycan synthesis</keyword>
<keyword id="KW-0670">Pyruvate</keyword>
<keyword id="KW-1185">Reference proteome</keyword>
<keyword id="KW-0808">Transferase</keyword>
<dbReference type="EC" id="2.5.1.7" evidence="1"/>
<dbReference type="EMBL" id="AP006627">
    <property type="protein sequence ID" value="BAD66412.1"/>
    <property type="molecule type" value="Genomic_DNA"/>
</dbReference>
<dbReference type="RefSeq" id="WP_011248715.1">
    <property type="nucleotide sequence ID" value="NC_006582.1"/>
</dbReference>
<dbReference type="SMR" id="Q5WB48"/>
<dbReference type="STRING" id="66692.ABC3881"/>
<dbReference type="KEGG" id="bcl:ABC3881"/>
<dbReference type="eggNOG" id="COG0766">
    <property type="taxonomic scope" value="Bacteria"/>
</dbReference>
<dbReference type="HOGENOM" id="CLU_027387_0_0_9"/>
<dbReference type="OrthoDB" id="9803760at2"/>
<dbReference type="UniPathway" id="UPA00219"/>
<dbReference type="Proteomes" id="UP000001168">
    <property type="component" value="Chromosome"/>
</dbReference>
<dbReference type="GO" id="GO:0005737">
    <property type="term" value="C:cytoplasm"/>
    <property type="evidence" value="ECO:0007669"/>
    <property type="project" value="UniProtKB-SubCell"/>
</dbReference>
<dbReference type="GO" id="GO:0008760">
    <property type="term" value="F:UDP-N-acetylglucosamine 1-carboxyvinyltransferase activity"/>
    <property type="evidence" value="ECO:0007669"/>
    <property type="project" value="UniProtKB-UniRule"/>
</dbReference>
<dbReference type="GO" id="GO:0051301">
    <property type="term" value="P:cell division"/>
    <property type="evidence" value="ECO:0007669"/>
    <property type="project" value="UniProtKB-KW"/>
</dbReference>
<dbReference type="GO" id="GO:0071555">
    <property type="term" value="P:cell wall organization"/>
    <property type="evidence" value="ECO:0007669"/>
    <property type="project" value="UniProtKB-KW"/>
</dbReference>
<dbReference type="GO" id="GO:0009252">
    <property type="term" value="P:peptidoglycan biosynthetic process"/>
    <property type="evidence" value="ECO:0007669"/>
    <property type="project" value="UniProtKB-UniRule"/>
</dbReference>
<dbReference type="GO" id="GO:0008360">
    <property type="term" value="P:regulation of cell shape"/>
    <property type="evidence" value="ECO:0007669"/>
    <property type="project" value="UniProtKB-KW"/>
</dbReference>
<dbReference type="GO" id="GO:0019277">
    <property type="term" value="P:UDP-N-acetylgalactosamine biosynthetic process"/>
    <property type="evidence" value="ECO:0007669"/>
    <property type="project" value="InterPro"/>
</dbReference>
<dbReference type="CDD" id="cd01555">
    <property type="entry name" value="UdpNAET"/>
    <property type="match status" value="1"/>
</dbReference>
<dbReference type="Gene3D" id="3.65.10.10">
    <property type="entry name" value="Enolpyruvate transferase domain"/>
    <property type="match status" value="2"/>
</dbReference>
<dbReference type="HAMAP" id="MF_00111">
    <property type="entry name" value="MurA"/>
    <property type="match status" value="1"/>
</dbReference>
<dbReference type="InterPro" id="IPR001986">
    <property type="entry name" value="Enolpyruvate_Tfrase_dom"/>
</dbReference>
<dbReference type="InterPro" id="IPR036968">
    <property type="entry name" value="Enolpyruvate_Tfrase_sf"/>
</dbReference>
<dbReference type="InterPro" id="IPR050068">
    <property type="entry name" value="MurA_subfamily"/>
</dbReference>
<dbReference type="InterPro" id="IPR013792">
    <property type="entry name" value="RNA3'P_cycl/enolpyr_Trfase_a/b"/>
</dbReference>
<dbReference type="InterPro" id="IPR005750">
    <property type="entry name" value="UDP_GlcNAc_COvinyl_MurA"/>
</dbReference>
<dbReference type="NCBIfam" id="TIGR01072">
    <property type="entry name" value="murA"/>
    <property type="match status" value="1"/>
</dbReference>
<dbReference type="NCBIfam" id="NF006873">
    <property type="entry name" value="PRK09369.1"/>
    <property type="match status" value="1"/>
</dbReference>
<dbReference type="NCBIfam" id="NF009470">
    <property type="entry name" value="PRK12830.1"/>
    <property type="match status" value="1"/>
</dbReference>
<dbReference type="PANTHER" id="PTHR43783">
    <property type="entry name" value="UDP-N-ACETYLGLUCOSAMINE 1-CARBOXYVINYLTRANSFERASE"/>
    <property type="match status" value="1"/>
</dbReference>
<dbReference type="PANTHER" id="PTHR43783:SF2">
    <property type="entry name" value="UDP-N-ACETYLGLUCOSAMINE 1-CARBOXYVINYLTRANSFERASE 2"/>
    <property type="match status" value="1"/>
</dbReference>
<dbReference type="Pfam" id="PF00275">
    <property type="entry name" value="EPSP_synthase"/>
    <property type="match status" value="1"/>
</dbReference>
<dbReference type="SUPFAM" id="SSF55205">
    <property type="entry name" value="EPT/RTPC-like"/>
    <property type="match status" value="1"/>
</dbReference>
<accession>Q5WB48</accession>
<proteinExistence type="inferred from homology"/>
<reference key="1">
    <citation type="submission" date="2003-10" db="EMBL/GenBank/DDBJ databases">
        <title>The complete genome sequence of the alkaliphilic Bacillus clausii KSM-K16.</title>
        <authorList>
            <person name="Takaki Y."/>
            <person name="Kageyama Y."/>
            <person name="Shimamura S."/>
            <person name="Suzuki H."/>
            <person name="Nishi S."/>
            <person name="Hatada Y."/>
            <person name="Kawai S."/>
            <person name="Ito S."/>
            <person name="Horikoshi K."/>
        </authorList>
    </citation>
    <scope>NUCLEOTIDE SEQUENCE [LARGE SCALE GENOMIC DNA]</scope>
    <source>
        <strain>KSM-K16</strain>
    </source>
</reference>
<gene>
    <name evidence="1" type="primary">murA2</name>
    <name type="synonym">murZ</name>
    <name type="ordered locus">ABC3881</name>
</gene>